<accession>P14903</accession>
<comment type="tissue specificity">
    <text>Fruit specific.</text>
</comment>
<comment type="domain">
    <text evidence="1">The presence of a 'disulfide through disulfide knot' structurally defines this protein as a knottin.</text>
</comment>
<comment type="miscellaneous">
    <text>This protein is sulfur-rich (Met and Cys rich).</text>
</comment>
<organism>
    <name type="scientific">Solanum lycopersicum</name>
    <name type="common">Tomato</name>
    <name type="synonym">Lycopersicon esculentum</name>
    <dbReference type="NCBI Taxonomy" id="4081"/>
    <lineage>
        <taxon>Eukaryota</taxon>
        <taxon>Viridiplantae</taxon>
        <taxon>Streptophyta</taxon>
        <taxon>Embryophyta</taxon>
        <taxon>Tracheophyta</taxon>
        <taxon>Spermatophyta</taxon>
        <taxon>Magnoliopsida</taxon>
        <taxon>eudicotyledons</taxon>
        <taxon>Gunneridae</taxon>
        <taxon>Pentapetalae</taxon>
        <taxon>asterids</taxon>
        <taxon>lamiids</taxon>
        <taxon>Solanales</taxon>
        <taxon>Solanaceae</taxon>
        <taxon>Solanoideae</taxon>
        <taxon>Solaneae</taxon>
        <taxon>Solanum</taxon>
        <taxon>Solanum subgen. Lycopersicon</taxon>
    </lineage>
</organism>
<proteinExistence type="evidence at protein level"/>
<evidence type="ECO:0000250" key="1"/>
<evidence type="ECO:0007829" key="2">
    <source>
        <dbReference type="PDB" id="2HLG"/>
    </source>
</evidence>
<gene>
    <name type="primary">2A11</name>
</gene>
<protein>
    <recommendedName>
        <fullName>Fruit-specific protein</fullName>
    </recommendedName>
</protein>
<feature type="chain" id="PRO_0000087357" description="Fruit-specific protein">
    <location>
        <begin position="1"/>
        <end position="96"/>
    </location>
</feature>
<feature type="disulfide bond" evidence="1">
    <location>
        <begin position="59"/>
        <end position="75"/>
    </location>
</feature>
<feature type="disulfide bond" evidence="1">
    <location>
        <begin position="63"/>
        <end position="78"/>
    </location>
</feature>
<feature type="disulfide bond" evidence="1">
    <location>
        <begin position="69"/>
        <end position="92"/>
    </location>
</feature>
<feature type="strand" evidence="2">
    <location>
        <begin position="64"/>
        <end position="66"/>
    </location>
</feature>
<feature type="helix" evidence="2">
    <location>
        <begin position="67"/>
        <end position="69"/>
    </location>
</feature>
<feature type="strand" evidence="2">
    <location>
        <begin position="70"/>
        <end position="74"/>
    </location>
</feature>
<feature type="strand" evidence="2">
    <location>
        <begin position="77"/>
        <end position="82"/>
    </location>
</feature>
<feature type="strand" evidence="2">
    <location>
        <begin position="88"/>
        <end position="94"/>
    </location>
</feature>
<sequence length="96" mass="10699">MAAKNSEMKFAIFFVVLLTTTLVDMSGISKMQVMALRDIPPQETLLKMKLLPTNILGLCNEPCSSNSDCIGITLCQFCKEKTDQYGLTYRTCNLLP</sequence>
<name>FSPM_SOLLC</name>
<dbReference type="EMBL" id="X13743">
    <property type="protein sequence ID" value="CAA32007.1"/>
    <property type="molecule type" value="Genomic_DNA"/>
</dbReference>
<dbReference type="EMBL" id="M21775">
    <property type="protein sequence ID" value="AAA34129.1"/>
    <property type="molecule type" value="mRNA"/>
</dbReference>
<dbReference type="EMBL" id="M21776">
    <property type="protein sequence ID" value="AAA34130.1"/>
    <property type="molecule type" value="mRNA"/>
</dbReference>
<dbReference type="EMBL" id="M87659">
    <property type="protein sequence ID" value="AAA34165.1"/>
    <property type="molecule type" value="Genomic_DNA"/>
</dbReference>
<dbReference type="PIR" id="S07603">
    <property type="entry name" value="S07603"/>
</dbReference>
<dbReference type="RefSeq" id="NP_001234762.1">
    <property type="nucleotide sequence ID" value="NM_001247833.2"/>
</dbReference>
<dbReference type="PDB" id="2HLG">
    <property type="method" value="NMR"/>
    <property type="chains" value="A=58-96"/>
</dbReference>
<dbReference type="PDBsum" id="2HLG"/>
<dbReference type="SMR" id="P14903"/>
<dbReference type="PaxDb" id="4081-Solyc07g049140.2.1"/>
<dbReference type="ProMEX" id="P14903"/>
<dbReference type="EnsemblPlants" id="Solyc07g049140.3.1">
    <property type="protein sequence ID" value="Solyc07g049140.3.1"/>
    <property type="gene ID" value="Solyc07g049140.3"/>
</dbReference>
<dbReference type="GeneID" id="543980"/>
<dbReference type="Gramene" id="Solyc07g049140.3.1">
    <property type="protein sequence ID" value="Solyc07g049140.3.1"/>
    <property type="gene ID" value="Solyc07g049140.3"/>
</dbReference>
<dbReference type="KEGG" id="sly:543980"/>
<dbReference type="HOGENOM" id="CLU_188695_0_0_1"/>
<dbReference type="InParanoid" id="P14903"/>
<dbReference type="OMA" id="TYSECSP"/>
<dbReference type="OrthoDB" id="1289950at2759"/>
<dbReference type="PhylomeDB" id="P14903"/>
<dbReference type="EvolutionaryTrace" id="P14903"/>
<dbReference type="Proteomes" id="UP000004994">
    <property type="component" value="Chromosome 7"/>
</dbReference>
<dbReference type="InterPro" id="IPR004231">
    <property type="entry name" value="COpept_A_inh-like"/>
</dbReference>
<dbReference type="Pfam" id="PF02977">
    <property type="entry name" value="CarbpepA_inh"/>
    <property type="match status" value="1"/>
</dbReference>
<reference key="1">
    <citation type="journal article" date="1989" name="Plant Mol. Biol.">
        <title>Isolation and characterization of a fruit-specific cDNA and the corresponding genomic clone from tomato.</title>
        <authorList>
            <person name="Pear J.R."/>
            <person name="Ridge N.P."/>
            <person name="Rasmussen R."/>
            <person name="Rose R.E."/>
            <person name="Houck C.M."/>
        </authorList>
    </citation>
    <scope>NUCLEOTIDE SEQUENCE [GENOMIC DNA / MRNA]</scope>
    <source>
        <strain>cv. UC82B</strain>
        <tissue>Fruit</tissue>
    </source>
</reference>
<reference key="2">
    <citation type="submission" date="1992-05" db="EMBL/GenBank/DDBJ databases">
        <title>The fruit specific expression of the tomato gene 2A11 is strongly influenced by far upstream located cis-acting elements.</title>
        <authorList>
            <person name="van Haaren M.J.J."/>
            <person name="Houck C.M."/>
        </authorList>
    </citation>
    <scope>NUCLEOTIDE SEQUENCE</scope>
    <source>
        <strain>cv. VFNT Cherry</strain>
    </source>
</reference>
<keyword id="KW-0002">3D-structure</keyword>
<keyword id="KW-1015">Disulfide bond</keyword>
<keyword id="KW-0960">Knottin</keyword>
<keyword id="KW-1185">Reference proteome</keyword>